<proteinExistence type="evidence at protein level"/>
<sequence>MADLQKIVDDLSSLTVLEAAELAKLLEEKWGVSAAAAVAVAAAPGAGGAAAPAEEKTEFTVVLASAGDKKIEVIKEVRAITGLGLKEAKDLVEGAPKPLKEGVNKEEAEKVKAQLEKAGAKVELK</sequence>
<dbReference type="EMBL" id="BX572603">
    <property type="protein sequence ID" value="CAE28710.1"/>
    <property type="molecule type" value="Genomic_DNA"/>
</dbReference>
<dbReference type="RefSeq" id="WP_011158812.1">
    <property type="nucleotide sequence ID" value="NZ_CP116810.1"/>
</dbReference>
<dbReference type="SMR" id="Q6N4R8"/>
<dbReference type="IntAct" id="Q6N4R8">
    <property type="interactions" value="1"/>
</dbReference>
<dbReference type="STRING" id="258594.RPA3269"/>
<dbReference type="GeneID" id="66894355"/>
<dbReference type="eggNOG" id="COG0222">
    <property type="taxonomic scope" value="Bacteria"/>
</dbReference>
<dbReference type="HOGENOM" id="CLU_086499_3_0_5"/>
<dbReference type="PhylomeDB" id="Q6N4R8"/>
<dbReference type="GO" id="GO:0022625">
    <property type="term" value="C:cytosolic large ribosomal subunit"/>
    <property type="evidence" value="ECO:0007669"/>
    <property type="project" value="TreeGrafter"/>
</dbReference>
<dbReference type="GO" id="GO:0003729">
    <property type="term" value="F:mRNA binding"/>
    <property type="evidence" value="ECO:0007669"/>
    <property type="project" value="TreeGrafter"/>
</dbReference>
<dbReference type="GO" id="GO:0003735">
    <property type="term" value="F:structural constituent of ribosome"/>
    <property type="evidence" value="ECO:0007669"/>
    <property type="project" value="InterPro"/>
</dbReference>
<dbReference type="GO" id="GO:0006412">
    <property type="term" value="P:translation"/>
    <property type="evidence" value="ECO:0007669"/>
    <property type="project" value="UniProtKB-UniRule"/>
</dbReference>
<dbReference type="CDD" id="cd00387">
    <property type="entry name" value="Ribosomal_L7_L12"/>
    <property type="match status" value="1"/>
</dbReference>
<dbReference type="FunFam" id="1.20.5.710:FF:000007">
    <property type="entry name" value="50S ribosomal protein L7/L12"/>
    <property type="match status" value="1"/>
</dbReference>
<dbReference type="FunFam" id="3.30.1390.10:FF:000001">
    <property type="entry name" value="50S ribosomal protein L7/L12"/>
    <property type="match status" value="1"/>
</dbReference>
<dbReference type="Gene3D" id="3.30.1390.10">
    <property type="match status" value="1"/>
</dbReference>
<dbReference type="Gene3D" id="1.20.5.710">
    <property type="entry name" value="Single helix bin"/>
    <property type="match status" value="1"/>
</dbReference>
<dbReference type="HAMAP" id="MF_00368">
    <property type="entry name" value="Ribosomal_bL12"/>
    <property type="match status" value="1"/>
</dbReference>
<dbReference type="InterPro" id="IPR000206">
    <property type="entry name" value="Ribosomal_bL12"/>
</dbReference>
<dbReference type="InterPro" id="IPR013823">
    <property type="entry name" value="Ribosomal_bL12_C"/>
</dbReference>
<dbReference type="InterPro" id="IPR014719">
    <property type="entry name" value="Ribosomal_bL12_C/ClpS-like"/>
</dbReference>
<dbReference type="InterPro" id="IPR008932">
    <property type="entry name" value="Ribosomal_bL12_oligo"/>
</dbReference>
<dbReference type="InterPro" id="IPR036235">
    <property type="entry name" value="Ribosomal_bL12_oligo_N_sf"/>
</dbReference>
<dbReference type="NCBIfam" id="TIGR00855">
    <property type="entry name" value="L12"/>
    <property type="match status" value="1"/>
</dbReference>
<dbReference type="PANTHER" id="PTHR45987">
    <property type="entry name" value="39S RIBOSOMAL PROTEIN L12"/>
    <property type="match status" value="1"/>
</dbReference>
<dbReference type="PANTHER" id="PTHR45987:SF4">
    <property type="entry name" value="LARGE RIBOSOMAL SUBUNIT PROTEIN BL12M"/>
    <property type="match status" value="1"/>
</dbReference>
<dbReference type="Pfam" id="PF00542">
    <property type="entry name" value="Ribosomal_L12"/>
    <property type="match status" value="1"/>
</dbReference>
<dbReference type="Pfam" id="PF16320">
    <property type="entry name" value="Ribosomal_L12_N"/>
    <property type="match status" value="1"/>
</dbReference>
<dbReference type="SUPFAM" id="SSF54736">
    <property type="entry name" value="ClpS-like"/>
    <property type="match status" value="1"/>
</dbReference>
<dbReference type="SUPFAM" id="SSF48300">
    <property type="entry name" value="Ribosomal protein L7/12, oligomerisation (N-terminal) domain"/>
    <property type="match status" value="1"/>
</dbReference>
<protein>
    <recommendedName>
        <fullName evidence="1">Large ribosomal subunit protein bL12</fullName>
    </recommendedName>
    <alternativeName>
        <fullName evidence="3">50S ribosomal protein L7/L12</fullName>
    </alternativeName>
    <alternativeName>
        <fullName>RRP-L7/L12</fullName>
    </alternativeName>
</protein>
<comment type="function">
    <text evidence="1">Forms part of the ribosomal stalk which helps the ribosome interact with GTP-bound translation factors. Is thus essential for accurate translation.</text>
</comment>
<comment type="subunit">
    <text evidence="1">Homodimer. Part of the ribosomal stalk of the 50S ribosomal subunit. Forms a multimeric L10(L12)X complex, where L10 forms an elongated spine to which 2 to 4 L12 dimers bind in a sequential fashion. Binds GTP-bound translation factors.</text>
</comment>
<comment type="PTM">
    <text>Two isoforms seem to exist. One is probably dimethylated on Lys-69 and monomethylated on Lys-86 while the other is probably acetylated or trimethylated on both Lys-86 and Lys-89.</text>
</comment>
<comment type="mass spectrometry"/>
<comment type="similarity">
    <text evidence="1">Belongs to the bacterial ribosomal protein bL12 family.</text>
</comment>
<name>RL7_RHOPA</name>
<organism>
    <name type="scientific">Rhodopseudomonas palustris (strain ATCC BAA-98 / CGA009)</name>
    <dbReference type="NCBI Taxonomy" id="258594"/>
    <lineage>
        <taxon>Bacteria</taxon>
        <taxon>Pseudomonadati</taxon>
        <taxon>Pseudomonadota</taxon>
        <taxon>Alphaproteobacteria</taxon>
        <taxon>Hyphomicrobiales</taxon>
        <taxon>Nitrobacteraceae</taxon>
        <taxon>Rhodopseudomonas</taxon>
    </lineage>
</organism>
<keyword id="KW-0007">Acetylation</keyword>
<keyword id="KW-0903">Direct protein sequencing</keyword>
<keyword id="KW-0488">Methylation</keyword>
<keyword id="KW-0687">Ribonucleoprotein</keyword>
<keyword id="KW-0689">Ribosomal protein</keyword>
<gene>
    <name evidence="1" type="primary">rplL</name>
    <name type="ordered locus">RPA3269</name>
</gene>
<accession>Q6N4R8</accession>
<reference key="1">
    <citation type="journal article" date="2004" name="Nat. Biotechnol.">
        <title>Complete genome sequence of the metabolically versatile photosynthetic bacterium Rhodopseudomonas palustris.</title>
        <authorList>
            <person name="Larimer F.W."/>
            <person name="Chain P."/>
            <person name="Hauser L."/>
            <person name="Lamerdin J.E."/>
            <person name="Malfatti S."/>
            <person name="Do L."/>
            <person name="Land M.L."/>
            <person name="Pelletier D.A."/>
            <person name="Beatty J.T."/>
            <person name="Lang A.S."/>
            <person name="Tabita F.R."/>
            <person name="Gibson J.L."/>
            <person name="Hanson T.E."/>
            <person name="Bobst C."/>
            <person name="Torres y Torres J.L."/>
            <person name="Peres C."/>
            <person name="Harrison F.H."/>
            <person name="Gibson J."/>
            <person name="Harwood C.S."/>
        </authorList>
    </citation>
    <scope>NUCLEOTIDE SEQUENCE [LARGE SCALE GENOMIC DNA]</scope>
    <source>
        <strain>ATCC BAA-98 / CGA009</strain>
    </source>
</reference>
<reference key="2">
    <citation type="journal article" date="2004" name="J. Proteome Res.">
        <title>Characterization of the 70S ribosome from Rhodopseudomonas palustris using an integrated 'top-down' and 'bottom-up' mass spectrometric approach.</title>
        <authorList>
            <person name="Strader M.B."/>
            <person name="VerBerkmoes N.C."/>
            <person name="Tabb D.L."/>
            <person name="Connelly H.M."/>
            <person name="Barton J.W."/>
            <person name="Bruce B.D."/>
            <person name="Pelletier D.A."/>
            <person name="Davison B.H."/>
            <person name="Hettich R.L."/>
            <person name="Larimer F.W."/>
            <person name="Hurst G.B."/>
        </authorList>
    </citation>
    <scope>PROTEIN SEQUENCE OF 57-89</scope>
    <scope>POST-TRANSLATIONAL MODIFICATIONS</scope>
    <scope>MASS SPECTROMETRY</scope>
    <source>
        <strain>ATCC BAA-98 / CGA009</strain>
    </source>
</reference>
<feature type="initiator methionine" description="Removed">
    <location>
        <position position="1"/>
    </location>
</feature>
<feature type="chain" id="PRO_0000223971" description="Large ribosomal subunit protein bL12">
    <location>
        <begin position="2"/>
        <end position="125"/>
    </location>
</feature>
<evidence type="ECO:0000255" key="1">
    <source>
        <dbReference type="HAMAP-Rule" id="MF_00368"/>
    </source>
</evidence>
<evidence type="ECO:0000269" key="2">
    <source>
    </source>
</evidence>
<evidence type="ECO:0000305" key="3"/>